<accession>Q2HQ46</accession>
<comment type="subcellular location">
    <subcellularLocation>
        <location evidence="3">Secreted</location>
    </subcellularLocation>
</comment>
<comment type="similarity">
    <text evidence="2">Belongs to the plant self-incompatibility (S1) protein family.</text>
</comment>
<proteinExistence type="evidence at transcript level"/>
<dbReference type="EMBL" id="AM184103">
    <property type="protein sequence ID" value="CAJ75682.1"/>
    <property type="molecule type" value="mRNA"/>
</dbReference>
<dbReference type="EMBL" id="AL078469">
    <property type="status" value="NOT_ANNOTATED_CDS"/>
    <property type="molecule type" value="Genomic_DNA"/>
</dbReference>
<dbReference type="EMBL" id="CP002687">
    <property type="protein sequence ID" value="AEE85577.1"/>
    <property type="molecule type" value="Genomic_DNA"/>
</dbReference>
<dbReference type="RefSeq" id="NP_001078467.1">
    <property type="nucleotide sequence ID" value="NM_001084998.1"/>
</dbReference>
<dbReference type="SMR" id="Q2HQ46"/>
<dbReference type="PaxDb" id="3702-AT4G29035.1"/>
<dbReference type="EnsemblPlants" id="AT4G29035.1">
    <property type="protein sequence ID" value="AT4G29035.1"/>
    <property type="gene ID" value="AT4G29035"/>
</dbReference>
<dbReference type="GeneID" id="5008172"/>
<dbReference type="Gramene" id="AT4G29035.1">
    <property type="protein sequence ID" value="AT4G29035.1"/>
    <property type="gene ID" value="AT4G29035"/>
</dbReference>
<dbReference type="KEGG" id="ath:AT4G29035"/>
<dbReference type="Araport" id="AT4G29035"/>
<dbReference type="TAIR" id="AT4G29035"/>
<dbReference type="eggNOG" id="ENOG502SQIK">
    <property type="taxonomic scope" value="Eukaryota"/>
</dbReference>
<dbReference type="HOGENOM" id="CLU_125658_1_1_1"/>
<dbReference type="InParanoid" id="Q2HQ46"/>
<dbReference type="OMA" id="FHRCGWE"/>
<dbReference type="PhylomeDB" id="Q2HQ46"/>
<dbReference type="PRO" id="PR:Q2HQ46"/>
<dbReference type="Proteomes" id="UP000006548">
    <property type="component" value="Chromosome 4"/>
</dbReference>
<dbReference type="ExpressionAtlas" id="Q2HQ46">
    <property type="expression patterns" value="baseline"/>
</dbReference>
<dbReference type="GO" id="GO:0005576">
    <property type="term" value="C:extracellular region"/>
    <property type="evidence" value="ECO:0007669"/>
    <property type="project" value="UniProtKB-SubCell"/>
</dbReference>
<dbReference type="GO" id="GO:0060320">
    <property type="term" value="P:rejection of self pollen"/>
    <property type="evidence" value="ECO:0007669"/>
    <property type="project" value="UniProtKB-KW"/>
</dbReference>
<dbReference type="InterPro" id="IPR010264">
    <property type="entry name" value="Self-incomp_S1"/>
</dbReference>
<dbReference type="PANTHER" id="PTHR31232">
    <property type="match status" value="1"/>
</dbReference>
<dbReference type="PANTHER" id="PTHR31232:SF156">
    <property type="entry name" value="PLANT SELF-INCOMPATIBILITY PROTEIN S1 FAMILY-RELATED"/>
    <property type="match status" value="1"/>
</dbReference>
<dbReference type="Pfam" id="PF05938">
    <property type="entry name" value="Self-incomp_S1"/>
    <property type="match status" value="1"/>
</dbReference>
<reference key="1">
    <citation type="submission" date="2006-01" db="EMBL/GenBank/DDBJ databases">
        <title>Novel protein ligands regulate the pathogen response in Arabidopsis.</title>
        <authorList>
            <person name="Wheeler M.J."/>
            <person name="Bell E.M."/>
            <person name="Holub E.B."/>
            <person name="Ride J.P."/>
            <person name="Franklin-Tong V.E."/>
            <person name="Franklin F.C.H."/>
        </authorList>
    </citation>
    <scope>NUCLEOTIDE SEQUENCE [MRNA]</scope>
    <source>
        <tissue>Leaf</tissue>
    </source>
</reference>
<reference key="2">
    <citation type="journal article" date="1999" name="Nature">
        <title>Sequence and analysis of chromosome 4 of the plant Arabidopsis thaliana.</title>
        <authorList>
            <person name="Mayer K.F.X."/>
            <person name="Schueller C."/>
            <person name="Wambutt R."/>
            <person name="Murphy G."/>
            <person name="Volckaert G."/>
            <person name="Pohl T."/>
            <person name="Duesterhoeft A."/>
            <person name="Stiekema W."/>
            <person name="Entian K.-D."/>
            <person name="Terryn N."/>
            <person name="Harris B."/>
            <person name="Ansorge W."/>
            <person name="Brandt P."/>
            <person name="Grivell L.A."/>
            <person name="Rieger M."/>
            <person name="Weichselgartner M."/>
            <person name="de Simone V."/>
            <person name="Obermaier B."/>
            <person name="Mache R."/>
            <person name="Mueller M."/>
            <person name="Kreis M."/>
            <person name="Delseny M."/>
            <person name="Puigdomenech P."/>
            <person name="Watson M."/>
            <person name="Schmidtheini T."/>
            <person name="Reichert B."/>
            <person name="Portetelle D."/>
            <person name="Perez-Alonso M."/>
            <person name="Boutry M."/>
            <person name="Bancroft I."/>
            <person name="Vos P."/>
            <person name="Hoheisel J."/>
            <person name="Zimmermann W."/>
            <person name="Wedler H."/>
            <person name="Ridley P."/>
            <person name="Langham S.-A."/>
            <person name="McCullagh B."/>
            <person name="Bilham L."/>
            <person name="Robben J."/>
            <person name="van der Schueren J."/>
            <person name="Grymonprez B."/>
            <person name="Chuang Y.-J."/>
            <person name="Vandenbussche F."/>
            <person name="Braeken M."/>
            <person name="Weltjens I."/>
            <person name="Voet M."/>
            <person name="Bastiaens I."/>
            <person name="Aert R."/>
            <person name="Defoor E."/>
            <person name="Weitzenegger T."/>
            <person name="Bothe G."/>
            <person name="Ramsperger U."/>
            <person name="Hilbert H."/>
            <person name="Braun M."/>
            <person name="Holzer E."/>
            <person name="Brandt A."/>
            <person name="Peters S."/>
            <person name="van Staveren M."/>
            <person name="Dirkse W."/>
            <person name="Mooijman P."/>
            <person name="Klein Lankhorst R."/>
            <person name="Rose M."/>
            <person name="Hauf J."/>
            <person name="Koetter P."/>
            <person name="Berneiser S."/>
            <person name="Hempel S."/>
            <person name="Feldpausch M."/>
            <person name="Lamberth S."/>
            <person name="Van den Daele H."/>
            <person name="De Keyser A."/>
            <person name="Buysshaert C."/>
            <person name="Gielen J."/>
            <person name="Villarroel R."/>
            <person name="De Clercq R."/>
            <person name="van Montagu M."/>
            <person name="Rogers J."/>
            <person name="Cronin A."/>
            <person name="Quail M.A."/>
            <person name="Bray-Allen S."/>
            <person name="Clark L."/>
            <person name="Doggett J."/>
            <person name="Hall S."/>
            <person name="Kay M."/>
            <person name="Lennard N."/>
            <person name="McLay K."/>
            <person name="Mayes R."/>
            <person name="Pettett A."/>
            <person name="Rajandream M.A."/>
            <person name="Lyne M."/>
            <person name="Benes V."/>
            <person name="Rechmann S."/>
            <person name="Borkova D."/>
            <person name="Bloecker H."/>
            <person name="Scharfe M."/>
            <person name="Grimm M."/>
            <person name="Loehnert T.-H."/>
            <person name="Dose S."/>
            <person name="de Haan M."/>
            <person name="Maarse A.C."/>
            <person name="Schaefer M."/>
            <person name="Mueller-Auer S."/>
            <person name="Gabel C."/>
            <person name="Fuchs M."/>
            <person name="Fartmann B."/>
            <person name="Granderath K."/>
            <person name="Dauner D."/>
            <person name="Herzl A."/>
            <person name="Neumann S."/>
            <person name="Argiriou A."/>
            <person name="Vitale D."/>
            <person name="Liguori R."/>
            <person name="Piravandi E."/>
            <person name="Massenet O."/>
            <person name="Quigley F."/>
            <person name="Clabauld G."/>
            <person name="Muendlein A."/>
            <person name="Felber R."/>
            <person name="Schnabl S."/>
            <person name="Hiller R."/>
            <person name="Schmidt W."/>
            <person name="Lecharny A."/>
            <person name="Aubourg S."/>
            <person name="Chefdor F."/>
            <person name="Cooke R."/>
            <person name="Berger C."/>
            <person name="Monfort A."/>
            <person name="Casacuberta E."/>
            <person name="Gibbons T."/>
            <person name="Weber N."/>
            <person name="Vandenbol M."/>
            <person name="Bargues M."/>
            <person name="Terol J."/>
            <person name="Torres A."/>
            <person name="Perez-Perez A."/>
            <person name="Purnelle B."/>
            <person name="Bent E."/>
            <person name="Johnson S."/>
            <person name="Tacon D."/>
            <person name="Jesse T."/>
            <person name="Heijnen L."/>
            <person name="Schwarz S."/>
            <person name="Scholler P."/>
            <person name="Heber S."/>
            <person name="Francs P."/>
            <person name="Bielke C."/>
            <person name="Frishman D."/>
            <person name="Haase D."/>
            <person name="Lemcke K."/>
            <person name="Mewes H.-W."/>
            <person name="Stocker S."/>
            <person name="Zaccaria P."/>
            <person name="Bevan M."/>
            <person name="Wilson R.K."/>
            <person name="de la Bastide M."/>
            <person name="Habermann K."/>
            <person name="Parnell L."/>
            <person name="Dedhia N."/>
            <person name="Gnoj L."/>
            <person name="Schutz K."/>
            <person name="Huang E."/>
            <person name="Spiegel L."/>
            <person name="Sekhon M."/>
            <person name="Murray J."/>
            <person name="Sheet P."/>
            <person name="Cordes M."/>
            <person name="Abu-Threideh J."/>
            <person name="Stoneking T."/>
            <person name="Kalicki J."/>
            <person name="Graves T."/>
            <person name="Harmon G."/>
            <person name="Edwards J."/>
            <person name="Latreille P."/>
            <person name="Courtney L."/>
            <person name="Cloud J."/>
            <person name="Abbott A."/>
            <person name="Scott K."/>
            <person name="Johnson D."/>
            <person name="Minx P."/>
            <person name="Bentley D."/>
            <person name="Fulton B."/>
            <person name="Miller N."/>
            <person name="Greco T."/>
            <person name="Kemp K."/>
            <person name="Kramer J."/>
            <person name="Fulton L."/>
            <person name="Mardis E."/>
            <person name="Dante M."/>
            <person name="Pepin K."/>
            <person name="Hillier L.W."/>
            <person name="Nelson J."/>
            <person name="Spieth J."/>
            <person name="Ryan E."/>
            <person name="Andrews S."/>
            <person name="Geisel C."/>
            <person name="Layman D."/>
            <person name="Du H."/>
            <person name="Ali J."/>
            <person name="Berghoff A."/>
            <person name="Jones K."/>
            <person name="Drone K."/>
            <person name="Cotton M."/>
            <person name="Joshu C."/>
            <person name="Antonoiu B."/>
            <person name="Zidanic M."/>
            <person name="Strong C."/>
            <person name="Sun H."/>
            <person name="Lamar B."/>
            <person name="Yordan C."/>
            <person name="Ma P."/>
            <person name="Zhong J."/>
            <person name="Preston R."/>
            <person name="Vil D."/>
            <person name="Shekher M."/>
            <person name="Matero A."/>
            <person name="Shah R."/>
            <person name="Swaby I.K."/>
            <person name="O'Shaughnessy A."/>
            <person name="Rodriguez M."/>
            <person name="Hoffman J."/>
            <person name="Till S."/>
            <person name="Granat S."/>
            <person name="Shohdy N."/>
            <person name="Hasegawa A."/>
            <person name="Hameed A."/>
            <person name="Lodhi M."/>
            <person name="Johnson A."/>
            <person name="Chen E."/>
            <person name="Marra M.A."/>
            <person name="Martienssen R."/>
            <person name="McCombie W.R."/>
        </authorList>
    </citation>
    <scope>NUCLEOTIDE SEQUENCE [LARGE SCALE GENOMIC DNA]</scope>
    <source>
        <strain>cv. Columbia</strain>
    </source>
</reference>
<reference key="3">
    <citation type="journal article" date="2017" name="Plant J.">
        <title>Araport11: a complete reannotation of the Arabidopsis thaliana reference genome.</title>
        <authorList>
            <person name="Cheng C.Y."/>
            <person name="Krishnakumar V."/>
            <person name="Chan A.P."/>
            <person name="Thibaud-Nissen F."/>
            <person name="Schobel S."/>
            <person name="Town C.D."/>
        </authorList>
    </citation>
    <scope>GENOME REANNOTATION</scope>
    <source>
        <strain>cv. Columbia</strain>
    </source>
</reference>
<reference key="4">
    <citation type="journal article" date="1999" name="Plant Mol. Biol.">
        <title>Analysis of Arabidopsis genome sequence reveals a large new gene family in plants.</title>
        <authorList>
            <person name="Ride J.P."/>
            <person name="Davies E.M."/>
            <person name="Franklin F.C.H."/>
            <person name="Marshall D.F."/>
        </authorList>
    </citation>
    <scope>GENE FAMILY</scope>
    <scope>NOMENCLATURE</scope>
    <source>
        <strain>cv. Columbia</strain>
    </source>
</reference>
<name>SPH74_ARATH</name>
<sequence>MNYIKQFILAICFYLVLTCQDHVLARDTTTRDIVVPKISEWQVTVANGLTTGETLFIHCKSKENDLGDINLKFLDRFSWNFGENMLHSTLFWCYMSKDDGHMNVKVFWDDVILFHRCDWKNCVWTAKNDGLYLWNSAIGEDVLSEKWKSGW</sequence>
<gene>
    <name evidence="2" type="primary">SPH74</name>
    <name evidence="4" type="ordered locus">At4g29035</name>
    <name evidence="2" type="ORF">F25O24</name>
</gene>
<keyword id="KW-1185">Reference proteome</keyword>
<keyword id="KW-0964">Secreted</keyword>
<keyword id="KW-0713">Self-incompatibility</keyword>
<keyword id="KW-0732">Signal</keyword>
<feature type="signal peptide" evidence="1">
    <location>
        <begin position="1"/>
        <end position="25"/>
    </location>
</feature>
<feature type="chain" id="PRO_5009342125" description="S-protein homolog 74">
    <location>
        <begin position="26"/>
        <end position="151"/>
    </location>
</feature>
<evidence type="ECO:0000255" key="1"/>
<evidence type="ECO:0000305" key="2"/>
<evidence type="ECO:0000305" key="3">
    <source>
    </source>
</evidence>
<evidence type="ECO:0000312" key="4">
    <source>
        <dbReference type="Araport" id="AT4G29035"/>
    </source>
</evidence>
<protein>
    <recommendedName>
        <fullName evidence="2">S-protein homolog 74</fullName>
    </recommendedName>
</protein>
<organism>
    <name type="scientific">Arabidopsis thaliana</name>
    <name type="common">Mouse-ear cress</name>
    <dbReference type="NCBI Taxonomy" id="3702"/>
    <lineage>
        <taxon>Eukaryota</taxon>
        <taxon>Viridiplantae</taxon>
        <taxon>Streptophyta</taxon>
        <taxon>Embryophyta</taxon>
        <taxon>Tracheophyta</taxon>
        <taxon>Spermatophyta</taxon>
        <taxon>Magnoliopsida</taxon>
        <taxon>eudicotyledons</taxon>
        <taxon>Gunneridae</taxon>
        <taxon>Pentapetalae</taxon>
        <taxon>rosids</taxon>
        <taxon>malvids</taxon>
        <taxon>Brassicales</taxon>
        <taxon>Brassicaceae</taxon>
        <taxon>Camelineae</taxon>
        <taxon>Arabidopsis</taxon>
    </lineage>
</organism>